<dbReference type="EC" id="2.1.1.298" evidence="1"/>
<dbReference type="EMBL" id="AE002098">
    <property type="protein sequence ID" value="AAF42004.1"/>
    <property type="molecule type" value="Genomic_DNA"/>
</dbReference>
<dbReference type="PIR" id="F81057">
    <property type="entry name" value="F81057"/>
</dbReference>
<dbReference type="RefSeq" id="NP_274660.1">
    <property type="nucleotide sequence ID" value="NC_003112.2"/>
</dbReference>
<dbReference type="SMR" id="Q9JYC0"/>
<dbReference type="FunCoup" id="Q9JYC0">
    <property type="interactions" value="179"/>
</dbReference>
<dbReference type="STRING" id="122586.NMB1655"/>
<dbReference type="PaxDb" id="122586-NMB1655"/>
<dbReference type="KEGG" id="nme:NMB1655"/>
<dbReference type="PATRIC" id="fig|122586.8.peg.2130"/>
<dbReference type="HOGENOM" id="CLU_018398_5_1_4"/>
<dbReference type="InParanoid" id="Q9JYC0"/>
<dbReference type="OrthoDB" id="9800643at2"/>
<dbReference type="Proteomes" id="UP000000425">
    <property type="component" value="Chromosome"/>
</dbReference>
<dbReference type="GO" id="GO:0005829">
    <property type="term" value="C:cytosol"/>
    <property type="evidence" value="ECO:0000318"/>
    <property type="project" value="GO_Central"/>
</dbReference>
<dbReference type="GO" id="GO:0003676">
    <property type="term" value="F:nucleic acid binding"/>
    <property type="evidence" value="ECO:0007669"/>
    <property type="project" value="InterPro"/>
</dbReference>
<dbReference type="GO" id="GO:0036009">
    <property type="term" value="F:protein-glutamine N-methyltransferase activity"/>
    <property type="evidence" value="ECO:0000318"/>
    <property type="project" value="GO_Central"/>
</dbReference>
<dbReference type="GO" id="GO:0032259">
    <property type="term" value="P:methylation"/>
    <property type="evidence" value="ECO:0007669"/>
    <property type="project" value="UniProtKB-KW"/>
</dbReference>
<dbReference type="CDD" id="cd02440">
    <property type="entry name" value="AdoMet_MTases"/>
    <property type="match status" value="1"/>
</dbReference>
<dbReference type="FunFam" id="3.40.50.150:FF:000042">
    <property type="entry name" value="50S ribosomal protein L3 glutamine methyltransferase"/>
    <property type="match status" value="1"/>
</dbReference>
<dbReference type="Gene3D" id="1.10.8.10">
    <property type="entry name" value="DNA helicase RuvA subunit, C-terminal domain"/>
    <property type="match status" value="1"/>
</dbReference>
<dbReference type="Gene3D" id="3.40.50.150">
    <property type="entry name" value="Vaccinia Virus protein VP39"/>
    <property type="match status" value="1"/>
</dbReference>
<dbReference type="HAMAP" id="MF_02125">
    <property type="entry name" value="L3_methyltr_PrmB"/>
    <property type="match status" value="1"/>
</dbReference>
<dbReference type="InterPro" id="IPR002052">
    <property type="entry name" value="DNA_methylase_N6_adenine_CS"/>
</dbReference>
<dbReference type="InterPro" id="IPR004556">
    <property type="entry name" value="HemK-like"/>
</dbReference>
<dbReference type="InterPro" id="IPR017127">
    <property type="entry name" value="Ribosome_uL3_MTase"/>
</dbReference>
<dbReference type="InterPro" id="IPR029063">
    <property type="entry name" value="SAM-dependent_MTases_sf"/>
</dbReference>
<dbReference type="InterPro" id="IPR007848">
    <property type="entry name" value="Small_mtfrase_dom"/>
</dbReference>
<dbReference type="NCBIfam" id="TIGR00536">
    <property type="entry name" value="hemK_fam"/>
    <property type="match status" value="1"/>
</dbReference>
<dbReference type="NCBIfam" id="TIGR03533">
    <property type="entry name" value="L3_gln_methyl"/>
    <property type="match status" value="1"/>
</dbReference>
<dbReference type="PANTHER" id="PTHR47806">
    <property type="entry name" value="50S RIBOSOMAL PROTEIN L3 GLUTAMINE METHYLTRANSFERASE"/>
    <property type="match status" value="1"/>
</dbReference>
<dbReference type="PANTHER" id="PTHR47806:SF1">
    <property type="entry name" value="RIBOSOMAL PROTEIN UL3 GLUTAMINE METHYLTRANSFERASE"/>
    <property type="match status" value="1"/>
</dbReference>
<dbReference type="Pfam" id="PF05175">
    <property type="entry name" value="MTS"/>
    <property type="match status" value="1"/>
</dbReference>
<dbReference type="PIRSF" id="PIRSF037167">
    <property type="entry name" value="Mtase_YfcB_prd"/>
    <property type="match status" value="1"/>
</dbReference>
<dbReference type="SUPFAM" id="SSF53335">
    <property type="entry name" value="S-adenosyl-L-methionine-dependent methyltransferases"/>
    <property type="match status" value="1"/>
</dbReference>
<organism>
    <name type="scientific">Neisseria meningitidis serogroup B (strain ATCC BAA-335 / MC58)</name>
    <dbReference type="NCBI Taxonomy" id="122586"/>
    <lineage>
        <taxon>Bacteria</taxon>
        <taxon>Pseudomonadati</taxon>
        <taxon>Pseudomonadota</taxon>
        <taxon>Betaproteobacteria</taxon>
        <taxon>Neisseriales</taxon>
        <taxon>Neisseriaceae</taxon>
        <taxon>Neisseria</taxon>
    </lineage>
</organism>
<sequence>MVHIMFNQAAQELTTIRDILRFAVSRFNEAGLFFGHGTDNAHDEAAYLILHTLNLPLDMLAPYLDAKLLEAEKEEVLAVIERRAVEHIPAAYLTHQAWQGEFDFYVDERVIIPRSFIYELLGDGLRPWIEYDELVHNALDLCTGSGCLAIQMAHHYPDAQIDAVDVSLDALEVAGINVEDYGLEERIRLIHTDLFEGLEGTYDLIVSNPPYVDAESVELLPEEYLHEPELALGSGADGLDATRQILLNAAKFLNPKGVLLVEIGHNRDVLEAAYPELPFTWLETSGGDGFVFLLTREQLLGEE</sequence>
<accession>Q9JYC0</accession>
<reference key="1">
    <citation type="journal article" date="2000" name="Science">
        <title>Complete genome sequence of Neisseria meningitidis serogroup B strain MC58.</title>
        <authorList>
            <person name="Tettelin H."/>
            <person name="Saunders N.J."/>
            <person name="Heidelberg J.F."/>
            <person name="Jeffries A.C."/>
            <person name="Nelson K.E."/>
            <person name="Eisen J.A."/>
            <person name="Ketchum K.A."/>
            <person name="Hood D.W."/>
            <person name="Peden J.F."/>
            <person name="Dodson R.J."/>
            <person name="Nelson W.C."/>
            <person name="Gwinn M.L."/>
            <person name="DeBoy R.T."/>
            <person name="Peterson J.D."/>
            <person name="Hickey E.K."/>
            <person name="Haft D.H."/>
            <person name="Salzberg S.L."/>
            <person name="White O."/>
            <person name="Fleischmann R.D."/>
            <person name="Dougherty B.A."/>
            <person name="Mason T.M."/>
            <person name="Ciecko A."/>
            <person name="Parksey D.S."/>
            <person name="Blair E."/>
            <person name="Cittone H."/>
            <person name="Clark E.B."/>
            <person name="Cotton M.D."/>
            <person name="Utterback T.R."/>
            <person name="Khouri H.M."/>
            <person name="Qin H."/>
            <person name="Vamathevan J.J."/>
            <person name="Gill J."/>
            <person name="Scarlato V."/>
            <person name="Masignani V."/>
            <person name="Pizza M."/>
            <person name="Grandi G."/>
            <person name="Sun L."/>
            <person name="Smith H.O."/>
            <person name="Fraser C.M."/>
            <person name="Moxon E.R."/>
            <person name="Rappuoli R."/>
            <person name="Venter J.C."/>
        </authorList>
    </citation>
    <scope>NUCLEOTIDE SEQUENCE [LARGE SCALE GENOMIC DNA]</scope>
    <source>
        <strain>ATCC BAA-335 / MC58</strain>
    </source>
</reference>
<comment type="function">
    <text evidence="1">Methylates large ribosomal subunit protein uL3 on a specific glutamine residue.</text>
</comment>
<comment type="catalytic activity">
    <reaction evidence="1">
        <text>L-glutaminyl-[ribosomal protein uL3] + S-adenosyl-L-methionine = N(5)-methyl-L-glutaminyl-[ribosomal protein uL3] + S-adenosyl-L-homocysteine + H(+)</text>
        <dbReference type="Rhea" id="RHEA:45020"/>
        <dbReference type="Rhea" id="RHEA-COMP:11063"/>
        <dbReference type="Rhea" id="RHEA-COMP:11064"/>
        <dbReference type="ChEBI" id="CHEBI:15378"/>
        <dbReference type="ChEBI" id="CHEBI:30011"/>
        <dbReference type="ChEBI" id="CHEBI:57856"/>
        <dbReference type="ChEBI" id="CHEBI:59789"/>
        <dbReference type="ChEBI" id="CHEBI:61891"/>
        <dbReference type="EC" id="2.1.1.298"/>
    </reaction>
</comment>
<comment type="similarity">
    <text evidence="1">Belongs to the protein N5-glutamine methyltransferase family. PrmB subfamily.</text>
</comment>
<proteinExistence type="inferred from homology"/>
<keyword id="KW-0489">Methyltransferase</keyword>
<keyword id="KW-1185">Reference proteome</keyword>
<keyword id="KW-0949">S-adenosyl-L-methionine</keyword>
<keyword id="KW-0808">Transferase</keyword>
<name>PRMB_NEIMB</name>
<evidence type="ECO:0000255" key="1">
    <source>
        <dbReference type="HAMAP-Rule" id="MF_02125"/>
    </source>
</evidence>
<feature type="chain" id="PRO_0000088008" description="Ribosomal protein uL3 glutamine methyltransferase">
    <location>
        <begin position="1"/>
        <end position="303"/>
    </location>
</feature>
<gene>
    <name evidence="1" type="primary">prmB</name>
    <name type="ordered locus">NMB1655</name>
</gene>
<protein>
    <recommendedName>
        <fullName evidence="1">Ribosomal protein uL3 glutamine methyltransferase</fullName>
        <shortName evidence="1">uL3 MTase</shortName>
        <ecNumber evidence="1">2.1.1.298</ecNumber>
    </recommendedName>
    <alternativeName>
        <fullName evidence="1">N5-glutamine methyltransferase PrmB</fullName>
    </alternativeName>
</protein>